<proteinExistence type="evidence at protein level"/>
<protein>
    <recommendedName>
        <fullName evidence="1">Bifunctional uridylyltransferase/uridylyl-removing enzyme</fullName>
        <shortName evidence="1">UTase/UR</shortName>
    </recommendedName>
    <alternativeName>
        <fullName evidence="1">Bifunctional [protein-PII] modification enzyme</fullName>
    </alternativeName>
    <alternativeName>
        <fullName evidence="1">Bifunctional nitrogen sensor protein</fullName>
    </alternativeName>
    <domain>
        <recommendedName>
            <fullName evidence="1">[Protein-PII] uridylyltransferase</fullName>
            <shortName evidence="1">PII uridylyltransferase</shortName>
            <shortName evidence="1">UTase</shortName>
            <ecNumber evidence="1">2.7.7.59</ecNumber>
        </recommendedName>
    </domain>
    <domain>
        <recommendedName>
            <fullName evidence="1">[Protein-PII]-UMP uridylyl-removing enzyme</fullName>
            <shortName evidence="1">UR</shortName>
            <ecNumber evidence="1">3.1.4.-</ecNumber>
        </recommendedName>
    </domain>
</protein>
<gene>
    <name evidence="1" type="primary">glnD</name>
    <name type="ordered locus">Rv2918c</name>
    <name type="ORF">MTCY338.07c</name>
</gene>
<accession>P9WN29</accession>
<accession>L0TB10</accession>
<accession>Q10961</accession>
<organism>
    <name type="scientific">Mycobacterium tuberculosis (strain ATCC 25618 / H37Rv)</name>
    <dbReference type="NCBI Taxonomy" id="83332"/>
    <lineage>
        <taxon>Bacteria</taxon>
        <taxon>Bacillati</taxon>
        <taxon>Actinomycetota</taxon>
        <taxon>Actinomycetes</taxon>
        <taxon>Mycobacteriales</taxon>
        <taxon>Mycobacteriaceae</taxon>
        <taxon>Mycobacterium</taxon>
        <taxon>Mycobacterium tuberculosis complex</taxon>
    </lineage>
</organism>
<evidence type="ECO:0000255" key="1">
    <source>
        <dbReference type="HAMAP-Rule" id="MF_00277"/>
    </source>
</evidence>
<evidence type="ECO:0000255" key="2">
    <source>
        <dbReference type="PROSITE-ProRule" id="PRU01175"/>
    </source>
</evidence>
<evidence type="ECO:0000269" key="3">
    <source>
    </source>
</evidence>
<evidence type="ECO:0000305" key="4">
    <source>
    </source>
</evidence>
<dbReference type="EC" id="2.7.7.59" evidence="1"/>
<dbReference type="EC" id="3.1.4.-" evidence="1"/>
<dbReference type="EMBL" id="AL123456">
    <property type="protein sequence ID" value="CCP45720.1"/>
    <property type="molecule type" value="Genomic_DNA"/>
</dbReference>
<dbReference type="PIR" id="F70747">
    <property type="entry name" value="F70747"/>
</dbReference>
<dbReference type="RefSeq" id="NP_217434.1">
    <property type="nucleotide sequence ID" value="NC_000962.3"/>
</dbReference>
<dbReference type="RefSeq" id="WP_003899539.1">
    <property type="nucleotide sequence ID" value="NZ_NVQJ01000006.1"/>
</dbReference>
<dbReference type="SMR" id="P9WN29"/>
<dbReference type="FunCoup" id="P9WN29">
    <property type="interactions" value="67"/>
</dbReference>
<dbReference type="STRING" id="83332.Rv2918c"/>
<dbReference type="PaxDb" id="83332-Rv2918c"/>
<dbReference type="GeneID" id="888621"/>
<dbReference type="KEGG" id="mtu:Rv2918c"/>
<dbReference type="KEGG" id="mtv:RVBD_2918c"/>
<dbReference type="TubercuList" id="Rv2918c"/>
<dbReference type="eggNOG" id="COG2844">
    <property type="taxonomic scope" value="Bacteria"/>
</dbReference>
<dbReference type="InParanoid" id="P9WN29"/>
<dbReference type="OrthoDB" id="9758038at2"/>
<dbReference type="PhylomeDB" id="P9WN29"/>
<dbReference type="Proteomes" id="UP000001584">
    <property type="component" value="Chromosome"/>
</dbReference>
<dbReference type="GO" id="GO:0009274">
    <property type="term" value="C:peptidoglycan-based cell wall"/>
    <property type="evidence" value="ECO:0007005"/>
    <property type="project" value="MTBBASE"/>
</dbReference>
<dbReference type="GO" id="GO:0005886">
    <property type="term" value="C:plasma membrane"/>
    <property type="evidence" value="ECO:0007005"/>
    <property type="project" value="MTBBASE"/>
</dbReference>
<dbReference type="GO" id="GO:0008773">
    <property type="term" value="F:[protein-PII] uridylyltransferase activity"/>
    <property type="evidence" value="ECO:0000315"/>
    <property type="project" value="CACAO"/>
</dbReference>
<dbReference type="GO" id="GO:0070566">
    <property type="term" value="F:adenylyltransferase activity"/>
    <property type="evidence" value="ECO:0000315"/>
    <property type="project" value="CACAO"/>
</dbReference>
<dbReference type="GO" id="GO:0008081">
    <property type="term" value="F:phosphoric diester hydrolase activity"/>
    <property type="evidence" value="ECO:0007669"/>
    <property type="project" value="UniProtKB-UniRule"/>
</dbReference>
<dbReference type="GO" id="GO:0006808">
    <property type="term" value="P:regulation of nitrogen utilization"/>
    <property type="evidence" value="ECO:0007669"/>
    <property type="project" value="UniProtKB-UniRule"/>
</dbReference>
<dbReference type="CDD" id="cd04873">
    <property type="entry name" value="ACT_UUR-ACR-like"/>
    <property type="match status" value="1"/>
</dbReference>
<dbReference type="CDD" id="cd00077">
    <property type="entry name" value="HDc"/>
    <property type="match status" value="1"/>
</dbReference>
<dbReference type="CDD" id="cd05401">
    <property type="entry name" value="NT_GlnE_GlnD_like"/>
    <property type="match status" value="1"/>
</dbReference>
<dbReference type="Gene3D" id="3.30.460.10">
    <property type="entry name" value="Beta Polymerase, domain 2"/>
    <property type="match status" value="1"/>
</dbReference>
<dbReference type="Gene3D" id="1.10.3090.10">
    <property type="entry name" value="cca-adding enzyme, domain 2"/>
    <property type="match status" value="1"/>
</dbReference>
<dbReference type="HAMAP" id="MF_00277">
    <property type="entry name" value="PII_uridylyl_transf"/>
    <property type="match status" value="1"/>
</dbReference>
<dbReference type="InterPro" id="IPR045865">
    <property type="entry name" value="ACT-like_dom_sf"/>
</dbReference>
<dbReference type="InterPro" id="IPR002912">
    <property type="entry name" value="ACT_dom"/>
</dbReference>
<dbReference type="InterPro" id="IPR003607">
    <property type="entry name" value="HD/PDEase_dom"/>
</dbReference>
<dbReference type="InterPro" id="IPR006674">
    <property type="entry name" value="HD_domain"/>
</dbReference>
<dbReference type="InterPro" id="IPR043519">
    <property type="entry name" value="NT_sf"/>
</dbReference>
<dbReference type="InterPro" id="IPR013546">
    <property type="entry name" value="PII_UdlTrfase/GS_AdlTrfase"/>
</dbReference>
<dbReference type="InterPro" id="IPR010043">
    <property type="entry name" value="UTase/UR"/>
</dbReference>
<dbReference type="NCBIfam" id="NF002895">
    <property type="entry name" value="PRK03381.1"/>
    <property type="match status" value="1"/>
</dbReference>
<dbReference type="NCBIfam" id="TIGR01693">
    <property type="entry name" value="UTase_glnD"/>
    <property type="match status" value="1"/>
</dbReference>
<dbReference type="PANTHER" id="PTHR47320">
    <property type="entry name" value="BIFUNCTIONAL URIDYLYLTRANSFERASE/URIDYLYL-REMOVING ENZYME"/>
    <property type="match status" value="1"/>
</dbReference>
<dbReference type="PANTHER" id="PTHR47320:SF1">
    <property type="entry name" value="BIFUNCTIONAL URIDYLYLTRANSFERASE_URIDYLYL-REMOVING ENZYME"/>
    <property type="match status" value="1"/>
</dbReference>
<dbReference type="Pfam" id="PF08335">
    <property type="entry name" value="GlnD_UR_UTase"/>
    <property type="match status" value="1"/>
</dbReference>
<dbReference type="Pfam" id="PF01966">
    <property type="entry name" value="HD"/>
    <property type="match status" value="1"/>
</dbReference>
<dbReference type="PIRSF" id="PIRSF006288">
    <property type="entry name" value="PII_uridyltransf"/>
    <property type="match status" value="1"/>
</dbReference>
<dbReference type="SMART" id="SM00471">
    <property type="entry name" value="HDc"/>
    <property type="match status" value="1"/>
</dbReference>
<dbReference type="SUPFAM" id="SSF55021">
    <property type="entry name" value="ACT-like"/>
    <property type="match status" value="1"/>
</dbReference>
<dbReference type="SUPFAM" id="SSF109604">
    <property type="entry name" value="HD-domain/PDEase-like"/>
    <property type="match status" value="1"/>
</dbReference>
<dbReference type="SUPFAM" id="SSF81301">
    <property type="entry name" value="Nucleotidyltransferase"/>
    <property type="match status" value="1"/>
</dbReference>
<dbReference type="SUPFAM" id="SSF81593">
    <property type="entry name" value="Nucleotidyltransferase substrate binding subunit/domain"/>
    <property type="match status" value="1"/>
</dbReference>
<dbReference type="PROSITE" id="PS51671">
    <property type="entry name" value="ACT"/>
    <property type="match status" value="2"/>
</dbReference>
<dbReference type="PROSITE" id="PS51831">
    <property type="entry name" value="HD"/>
    <property type="match status" value="1"/>
</dbReference>
<reference key="1">
    <citation type="journal article" date="1998" name="Nature">
        <title>Deciphering the biology of Mycobacterium tuberculosis from the complete genome sequence.</title>
        <authorList>
            <person name="Cole S.T."/>
            <person name="Brosch R."/>
            <person name="Parkhill J."/>
            <person name="Garnier T."/>
            <person name="Churcher C.M."/>
            <person name="Harris D.E."/>
            <person name="Gordon S.V."/>
            <person name="Eiglmeier K."/>
            <person name="Gas S."/>
            <person name="Barry C.E. III"/>
            <person name="Tekaia F."/>
            <person name="Badcock K."/>
            <person name="Basham D."/>
            <person name="Brown D."/>
            <person name="Chillingworth T."/>
            <person name="Connor R."/>
            <person name="Davies R.M."/>
            <person name="Devlin K."/>
            <person name="Feltwell T."/>
            <person name="Gentles S."/>
            <person name="Hamlin N."/>
            <person name="Holroyd S."/>
            <person name="Hornsby T."/>
            <person name="Jagels K."/>
            <person name="Krogh A."/>
            <person name="McLean J."/>
            <person name="Moule S."/>
            <person name="Murphy L.D."/>
            <person name="Oliver S."/>
            <person name="Osborne J."/>
            <person name="Quail M.A."/>
            <person name="Rajandream M.A."/>
            <person name="Rogers J."/>
            <person name="Rutter S."/>
            <person name="Seeger K."/>
            <person name="Skelton S."/>
            <person name="Squares S."/>
            <person name="Squares R."/>
            <person name="Sulston J.E."/>
            <person name="Taylor K."/>
            <person name="Whitehead S."/>
            <person name="Barrell B.G."/>
        </authorList>
    </citation>
    <scope>NUCLEOTIDE SEQUENCE [LARGE SCALE GENOMIC DNA]</scope>
    <source>
        <strain>ATCC 25618 / H37Rv</strain>
    </source>
</reference>
<reference key="2">
    <citation type="journal article" date="2007" name="Tuberculosis">
        <title>The role of GlnD in ammonia assimilation in Mycobacterium tuberculosis.</title>
        <authorList>
            <person name="Read R."/>
            <person name="Pashley C.A."/>
            <person name="Smith D."/>
            <person name="Parish T."/>
        </authorList>
    </citation>
    <scope>FUNCTION</scope>
    <scope>INDUCTION</scope>
    <scope>DISRUPTION PHENOTYPE</scope>
    <source>
        <strain>ATCC 25618 / H37Rv</strain>
    </source>
</reference>
<reference key="3">
    <citation type="journal article" date="2011" name="Mol. Cell. Proteomics">
        <title>Proteogenomic analysis of Mycobacterium tuberculosis by high resolution mass spectrometry.</title>
        <authorList>
            <person name="Kelkar D.S."/>
            <person name="Kumar D."/>
            <person name="Kumar P."/>
            <person name="Balakrishnan L."/>
            <person name="Muthusamy B."/>
            <person name="Yadav A.K."/>
            <person name="Shrivastava P."/>
            <person name="Marimuthu A."/>
            <person name="Anand S."/>
            <person name="Sundaram H."/>
            <person name="Kingsbury R."/>
            <person name="Harsha H.C."/>
            <person name="Nair B."/>
            <person name="Prasad T.S."/>
            <person name="Chauhan D.S."/>
            <person name="Katoch K."/>
            <person name="Katoch V.M."/>
            <person name="Kumar P."/>
            <person name="Chaerkady R."/>
            <person name="Ramachandran S."/>
            <person name="Dash D."/>
            <person name="Pandey A."/>
        </authorList>
    </citation>
    <scope>IDENTIFICATION BY MASS SPECTROMETRY [LARGE SCALE ANALYSIS]</scope>
    <source>
        <strain>ATCC 25618 / H37Rv</strain>
    </source>
</reference>
<comment type="function">
    <text evidence="4">Modifies, by uridylylation and deuridylylation, the PII regulatory protein (GlnB), in response to the nitrogen status of the cell that GlnD senses through the glutamine level. Under low glutamine levels, catalyzes the conversion of the PII protein and UTP to PII-UMP and PPi, while under higher glutamine levels, GlnD hydrolyzes PII-UMP to PII and UMP (deuridylylation). Thus, controls uridylylation state and activity of the PII protein, and plays an important role in the regulation of nitrogen assimilation and metabolism (Probable).</text>
</comment>
<comment type="catalytic activity">
    <reaction evidence="1">
        <text>[protein-PII]-L-tyrosine + UTP = [protein-PII]-uridylyl-L-tyrosine + diphosphate</text>
        <dbReference type="Rhea" id="RHEA:13673"/>
        <dbReference type="Rhea" id="RHEA-COMP:12147"/>
        <dbReference type="Rhea" id="RHEA-COMP:12148"/>
        <dbReference type="ChEBI" id="CHEBI:33019"/>
        <dbReference type="ChEBI" id="CHEBI:46398"/>
        <dbReference type="ChEBI" id="CHEBI:46858"/>
        <dbReference type="ChEBI" id="CHEBI:90602"/>
        <dbReference type="EC" id="2.7.7.59"/>
    </reaction>
</comment>
<comment type="catalytic activity">
    <reaction evidence="1">
        <text>[protein-PII]-uridylyl-L-tyrosine + H2O = [protein-PII]-L-tyrosine + UMP + H(+)</text>
        <dbReference type="Rhea" id="RHEA:48600"/>
        <dbReference type="Rhea" id="RHEA-COMP:12147"/>
        <dbReference type="Rhea" id="RHEA-COMP:12148"/>
        <dbReference type="ChEBI" id="CHEBI:15377"/>
        <dbReference type="ChEBI" id="CHEBI:15378"/>
        <dbReference type="ChEBI" id="CHEBI:46858"/>
        <dbReference type="ChEBI" id="CHEBI:57865"/>
        <dbReference type="ChEBI" id="CHEBI:90602"/>
    </reaction>
</comment>
<comment type="cofactor">
    <cofactor evidence="1">
        <name>Mg(2+)</name>
        <dbReference type="ChEBI" id="CHEBI:18420"/>
    </cofactor>
</comment>
<comment type="activity regulation">
    <text evidence="1">Uridylyltransferase (UTase) activity is inhibited by glutamine, while glutamine activates uridylyl-removing (UR) activity.</text>
</comment>
<comment type="induction">
    <text evidence="3">Slightly up-regulated in a low ammonia medium.</text>
</comment>
<comment type="domain">
    <text evidence="1">Has four distinct domains: an N-terminal nucleotidyltransferase (NT) domain responsible for UTase activity, a central HD domain that encodes UR activity, and two C-terminal ACT domains that seem to have a role in glutamine sensing.</text>
</comment>
<comment type="disruption phenotype">
    <text evidence="3">Cells lacking this gene have no growth defect in media containing different nitrogen sources. Total glutamine synthetase (GS) activity in culture filtrates is markedly reduced in the mutant, although activity in cell-free extracts remains normal. Virulence is unaffected in both in vitro and in vivo model systems of infection.</text>
</comment>
<comment type="similarity">
    <text evidence="1">Belongs to the GlnD family.</text>
</comment>
<keyword id="KW-0378">Hydrolase</keyword>
<keyword id="KW-0460">Magnesium</keyword>
<keyword id="KW-0511">Multifunctional enzyme</keyword>
<keyword id="KW-0548">Nucleotidyltransferase</keyword>
<keyword id="KW-1185">Reference proteome</keyword>
<keyword id="KW-0677">Repeat</keyword>
<keyword id="KW-0808">Transferase</keyword>
<feature type="chain" id="PRO_0000192745" description="Bifunctional uridylyltransferase/uridylyl-removing enzyme">
    <location>
        <begin position="1"/>
        <end position="808"/>
    </location>
</feature>
<feature type="domain" description="HD" evidence="2">
    <location>
        <begin position="430"/>
        <end position="544"/>
    </location>
</feature>
<feature type="domain" description="ACT 1" evidence="1">
    <location>
        <begin position="610"/>
        <end position="686"/>
    </location>
</feature>
<feature type="domain" description="ACT 2" evidence="1">
    <location>
        <begin position="730"/>
        <end position="805"/>
    </location>
</feature>
<feature type="region of interest" description="Uridylyltransferase">
    <location>
        <begin position="1"/>
        <end position="315"/>
    </location>
</feature>
<feature type="region of interest" description="Uridylyl-removing">
    <location>
        <begin position="316"/>
        <end position="609"/>
    </location>
</feature>
<name>GLND_MYCTU</name>
<sequence length="808" mass="86438">MEAESPCAASDLAVARRELLSGNHRELDPVGLRQTWLDLHESWLIDKADEIGIADASGFAIVGVGGLGRRELLPYSDLDVLLLHDGKPADILRPVADRLWYPLWDANIRLDHSVRTVSEALTIANSDLMAALGMLEARHIAGDQQLSFALIDGVRRQWRNGIRSRMGELVEMTYARWRRCGRIAQRAEPDLKLGRGGLRDVQLLDALALAQLIDRHGIGHTDLPAGSLDGAYRTLLDVRTELHRVSGRGRDHLLAQFADEISAALGFGDRFDLARTLSSAGRTIGYHAEAGLRTAANALPRRGISALVRRPKRRPLDEGVVEYAGEIVLARDAEPEHDPGLVLRVAAASADTGLPIGAATLSRLAASVPDLPTPWPQEALDDLLVVLSAGPTTVATIEALDRTGLWGRLLPEWEPIRDLPPRDVAHKWTVDRHVVETAVHAAPLATRVARPDLLALGALLHDIGKGRGTDHSVLGAELVIPVCTRLGLSPPDVRTLSKLVRHHLLLPITATRRDLNDPKTIEAVSEALGGDPQLLEVLHALSEADSKATGPGVWSDWKASLVDDLVRRCRMVMAGESLPQAEPTAPHYLSLAADHGVHVEISPRDGERIDAVIVAPDERGLVSKAAAVLALNSLRVHSASVNVHQGVAITEFVVSPLFGSPPAAELVRQQFVGALNGDVDVLGMLQKRDSDAASLVSARAGDVQAGVPVTRTAAPPRILWLDTAAPAKLILEVRAMDRAGLLALLAGALEGAGAGIVWAKVNTFGSTAADVFCVTVPAELDARAAVEQHLLEVLGASVDVVVDEPVGD</sequence>